<feature type="signal peptide" evidence="12 13">
    <location>
        <begin position="1"/>
        <end position="17"/>
    </location>
</feature>
<feature type="chain" id="PRO_0000004174" description="Calreticulin">
    <location>
        <begin position="18"/>
        <end position="416"/>
    </location>
</feature>
<feature type="repeat" description="1-1">
    <location>
        <begin position="191"/>
        <end position="202"/>
    </location>
</feature>
<feature type="repeat" description="1-2">
    <location>
        <begin position="210"/>
        <end position="221"/>
    </location>
</feature>
<feature type="repeat" description="1-3">
    <location>
        <begin position="227"/>
        <end position="238"/>
    </location>
</feature>
<feature type="repeat" description="1-4">
    <location>
        <begin position="244"/>
        <end position="255"/>
    </location>
</feature>
<feature type="repeat" description="2-1">
    <location>
        <begin position="259"/>
        <end position="269"/>
    </location>
</feature>
<feature type="repeat" description="2-2">
    <location>
        <begin position="273"/>
        <end position="283"/>
    </location>
</feature>
<feature type="repeat" description="2-3">
    <location>
        <begin position="287"/>
        <end position="297"/>
    </location>
</feature>
<feature type="region of interest" description="N-domain">
    <location>
        <begin position="18"/>
        <end position="197"/>
    </location>
</feature>
<feature type="region of interest" description="4 X approximate repeats">
    <location>
        <begin position="191"/>
        <end position="255"/>
    </location>
</feature>
<feature type="region of interest" description="Disordered" evidence="6">
    <location>
        <begin position="193"/>
        <end position="277"/>
    </location>
</feature>
<feature type="region of interest" description="P-domain">
    <location>
        <begin position="198"/>
        <end position="308"/>
    </location>
</feature>
<feature type="region of interest" description="Interaction with PPIB" evidence="8">
    <location>
        <begin position="237"/>
        <end position="270"/>
    </location>
</feature>
<feature type="region of interest" description="3 X approximate repeats">
    <location>
        <begin position="259"/>
        <end position="297"/>
    </location>
</feature>
<feature type="region of interest" description="C-domain">
    <location>
        <begin position="309"/>
        <end position="416"/>
    </location>
</feature>
<feature type="region of interest" description="Disordered" evidence="6">
    <location>
        <begin position="350"/>
        <end position="416"/>
    </location>
</feature>
<feature type="short sequence motif" description="Prevents secretion from ER">
    <location>
        <begin position="413"/>
        <end position="416"/>
    </location>
</feature>
<feature type="compositionally biased region" description="Basic and acidic residues" evidence="6">
    <location>
        <begin position="207"/>
        <end position="251"/>
    </location>
</feature>
<feature type="compositionally biased region" description="Acidic residues" evidence="6">
    <location>
        <begin position="252"/>
        <end position="261"/>
    </location>
</feature>
<feature type="compositionally biased region" description="Basic and acidic residues" evidence="6">
    <location>
        <begin position="352"/>
        <end position="379"/>
    </location>
</feature>
<feature type="compositionally biased region" description="Acidic residues" evidence="6">
    <location>
        <begin position="380"/>
        <end position="408"/>
    </location>
</feature>
<feature type="binding site" evidence="9">
    <location>
        <position position="26"/>
    </location>
    <ligand>
        <name>Ca(2+)</name>
        <dbReference type="ChEBI" id="CHEBI:29108"/>
    </ligand>
</feature>
<feature type="binding site" evidence="9">
    <location>
        <position position="62"/>
    </location>
    <ligand>
        <name>Ca(2+)</name>
        <dbReference type="ChEBI" id="CHEBI:29108"/>
    </ligand>
</feature>
<feature type="binding site" evidence="9">
    <location>
        <position position="64"/>
    </location>
    <ligand>
        <name>Ca(2+)</name>
        <dbReference type="ChEBI" id="CHEBI:29108"/>
    </ligand>
</feature>
<feature type="binding site" evidence="9 17">
    <location>
        <position position="109"/>
    </location>
    <ligand>
        <name>an alpha-D-glucoside</name>
        <dbReference type="ChEBI" id="CHEBI:22390"/>
    </ligand>
</feature>
<feature type="binding site" evidence="9 17">
    <location>
        <position position="111"/>
    </location>
    <ligand>
        <name>an alpha-D-glucoside</name>
        <dbReference type="ChEBI" id="CHEBI:22390"/>
    </ligand>
</feature>
<feature type="binding site" evidence="9 17">
    <location>
        <position position="128"/>
    </location>
    <ligand>
        <name>an alpha-D-glucoside</name>
        <dbReference type="ChEBI" id="CHEBI:22390"/>
    </ligand>
</feature>
<feature type="binding site" evidence="9 17">
    <location>
        <position position="135"/>
    </location>
    <ligand>
        <name>an alpha-D-glucoside</name>
        <dbReference type="ChEBI" id="CHEBI:22390"/>
    </ligand>
</feature>
<feature type="binding site" evidence="9 17">
    <location>
        <position position="317"/>
    </location>
    <ligand>
        <name>an alpha-D-glucoside</name>
        <dbReference type="ChEBI" id="CHEBI:22390"/>
    </ligand>
</feature>
<feature type="binding site" evidence="9">
    <location>
        <position position="328"/>
    </location>
    <ligand>
        <name>Ca(2+)</name>
        <dbReference type="ChEBI" id="CHEBI:29108"/>
    </ligand>
</feature>
<feature type="modified residue" description="N6-acetyllysine" evidence="3">
    <location>
        <position position="48"/>
    </location>
</feature>
<feature type="modified residue" description="N6-(2-hydroxyisobutyryl)lysine" evidence="3">
    <location>
        <position position="64"/>
    </location>
</feature>
<feature type="modified residue" description="N6-acetyllysine" evidence="3">
    <location>
        <position position="159"/>
    </location>
</feature>
<feature type="modified residue" description="N6-acetyllysine" evidence="20">
    <location>
        <position position="209"/>
    </location>
</feature>
<feature type="disulfide bond" evidence="9 10">
    <location>
        <begin position="105"/>
        <end position="137"/>
    </location>
</feature>
<feature type="sequence conflict" description="In Ref. 3; BAE35687." evidence="15" ref="3">
    <original>K</original>
    <variation>R</variation>
    <location>
        <position position="272"/>
    </location>
</feature>
<feature type="sequence conflict" description="In Ref. 3; BAE35687." evidence="15" ref="3">
    <original>E</original>
    <variation>Q</variation>
    <location>
        <position position="407"/>
    </location>
</feature>
<feature type="strand" evidence="22">
    <location>
        <begin position="21"/>
        <end position="25"/>
    </location>
</feature>
<feature type="helix" evidence="22">
    <location>
        <begin position="30"/>
        <end position="35"/>
    </location>
</feature>
<feature type="strand" evidence="21">
    <location>
        <begin position="37"/>
        <end position="39"/>
    </location>
</feature>
<feature type="strand" evidence="22">
    <location>
        <begin position="42"/>
        <end position="44"/>
    </location>
</feature>
<feature type="strand" evidence="22">
    <location>
        <begin position="49"/>
        <end position="52"/>
    </location>
</feature>
<feature type="turn" evidence="22">
    <location>
        <begin position="60"/>
        <end position="63"/>
    </location>
</feature>
<feature type="strand" evidence="22">
    <location>
        <begin position="65"/>
        <end position="68"/>
    </location>
</feature>
<feature type="strand" evidence="22">
    <location>
        <begin position="70"/>
        <end position="84"/>
    </location>
</feature>
<feature type="strand" evidence="22">
    <location>
        <begin position="91"/>
        <end position="98"/>
    </location>
</feature>
<feature type="strand" evidence="22">
    <location>
        <begin position="104"/>
        <end position="107"/>
    </location>
</feature>
<feature type="strand" evidence="22">
    <location>
        <begin position="110"/>
        <end position="113"/>
    </location>
</feature>
<feature type="helix" evidence="22">
    <location>
        <begin position="119"/>
        <end position="121"/>
    </location>
</feature>
<feature type="strand" evidence="22">
    <location>
        <begin position="129"/>
        <end position="137"/>
    </location>
</feature>
<feature type="turn" evidence="22">
    <location>
        <begin position="138"/>
        <end position="140"/>
    </location>
</feature>
<feature type="strand" evidence="22">
    <location>
        <begin position="141"/>
        <end position="150"/>
    </location>
</feature>
<feature type="strand" evidence="22">
    <location>
        <begin position="153"/>
        <end position="156"/>
    </location>
</feature>
<feature type="strand" evidence="22">
    <location>
        <begin position="166"/>
        <end position="176"/>
    </location>
</feature>
<feature type="strand" evidence="22">
    <location>
        <begin position="180"/>
        <end position="186"/>
    </location>
</feature>
<feature type="strand" evidence="22">
    <location>
        <begin position="189"/>
        <end position="195"/>
    </location>
</feature>
<feature type="helix" evidence="22">
    <location>
        <begin position="196"/>
        <end position="199"/>
    </location>
</feature>
<feature type="strand" evidence="23">
    <location>
        <begin position="206"/>
        <end position="209"/>
    </location>
</feature>
<feature type="strand" evidence="23">
    <location>
        <begin position="293"/>
        <end position="295"/>
    </location>
</feature>
<feature type="turn" evidence="22">
    <location>
        <begin position="303"/>
        <end position="306"/>
    </location>
</feature>
<feature type="strand" evidence="22">
    <location>
        <begin position="311"/>
        <end position="322"/>
    </location>
</feature>
<feature type="strand" evidence="22">
    <location>
        <begin position="326"/>
        <end position="334"/>
    </location>
</feature>
<feature type="helix" evidence="22">
    <location>
        <begin position="336"/>
        <end position="345"/>
    </location>
</feature>
<feature type="helix" evidence="22">
    <location>
        <begin position="347"/>
        <end position="360"/>
    </location>
</feature>
<protein>
    <recommendedName>
        <fullName>Calreticulin</fullName>
    </recommendedName>
    <alternativeName>
        <fullName>CRP55</fullName>
    </alternativeName>
    <alternativeName>
        <fullName>Calregulin</fullName>
    </alternativeName>
    <alternativeName>
        <fullName>Endoplasmic reticulum resident protein 60</fullName>
        <shortName>ERp60</shortName>
    </alternativeName>
    <alternativeName>
        <fullName>HACBP</fullName>
    </alternativeName>
</protein>
<name>CALR_MOUSE</name>
<evidence type="ECO:0000250" key="1"/>
<evidence type="ECO:0000250" key="2">
    <source>
        <dbReference type="UniProtKB" id="P18418"/>
    </source>
</evidence>
<evidence type="ECO:0000250" key="3">
    <source>
        <dbReference type="UniProtKB" id="P27797"/>
    </source>
</evidence>
<evidence type="ECO:0000250" key="4">
    <source>
        <dbReference type="UniProtKB" id="P28491"/>
    </source>
</evidence>
<evidence type="ECO:0000250" key="5">
    <source>
        <dbReference type="UniProtKB" id="Q8K3H7"/>
    </source>
</evidence>
<evidence type="ECO:0000256" key="6">
    <source>
        <dbReference type="SAM" id="MobiDB-lite"/>
    </source>
</evidence>
<evidence type="ECO:0000269" key="7">
    <source>
    </source>
</evidence>
<evidence type="ECO:0000269" key="8">
    <source>
    </source>
</evidence>
<evidence type="ECO:0000269" key="9">
    <source>
    </source>
</evidence>
<evidence type="ECO:0000269" key="10">
    <source>
    </source>
</evidence>
<evidence type="ECO:0000269" key="11">
    <source>
    </source>
</evidence>
<evidence type="ECO:0000269" key="12">
    <source>
    </source>
</evidence>
<evidence type="ECO:0000269" key="13">
    <source>
    </source>
</evidence>
<evidence type="ECO:0000269" key="14">
    <source>
    </source>
</evidence>
<evidence type="ECO:0000305" key="15"/>
<evidence type="ECO:0007744" key="16">
    <source>
        <dbReference type="PDB" id="3O0V"/>
    </source>
</evidence>
<evidence type="ECO:0007744" key="17">
    <source>
        <dbReference type="PDB" id="3O0W"/>
    </source>
</evidence>
<evidence type="ECO:0007744" key="18">
    <source>
        <dbReference type="PDB" id="3O0X"/>
    </source>
</evidence>
<evidence type="ECO:0007744" key="19">
    <source>
        <dbReference type="PDB" id="3RG0"/>
    </source>
</evidence>
<evidence type="ECO:0007744" key="20">
    <source>
    </source>
</evidence>
<evidence type="ECO:0007829" key="21">
    <source>
        <dbReference type="PDB" id="3O0V"/>
    </source>
</evidence>
<evidence type="ECO:0007829" key="22">
    <source>
        <dbReference type="PDB" id="3O0W"/>
    </source>
</evidence>
<evidence type="ECO:0007829" key="23">
    <source>
        <dbReference type="PDB" id="3RG0"/>
    </source>
</evidence>
<comment type="function">
    <text evidence="3 4 5 9 10">Calcium-binding chaperone that promotes folding, oligomeric assembly and quality control in the endoplasmic reticulum (ER) via the calreticulin/calnexin cycle. This lectin interacts transiently with almost all of the monoglucosylated glycoproteins that are synthesized in the ER (PubMed:20880849, PubMed:21652723). Interacts with the DNA-binding domain of NR3C1 and mediates its nuclear export (By similarity). Involved in maternal gene expression regulation. May participate in oocyte maturation via the regulation of calcium homeostasis (By similarity). Present in the cortical granules of non-activated oocytes, is exocytosed during the cortical reaction in response to oocyte activation and might participate in the block to polyspermy (By similarity).</text>
</comment>
<comment type="subunit">
    <text evidence="2 3 7 8 11">Monomer. Interacts with GABARAP, NR3C1, PDIA3/ERp57 and TRIM21. Interacts (via P-domain) with PDIA5 (By similarity). Interacts with PPIB (PubMed:20801878). Interacts with SPACA9 (PubMed:24256100). Component of an EIF2 complex at least composed of CELF1/CUGBP1, CALR, CALR3, EIF2S1, EIF2S2, HSP90B1 and HSPA5 (PubMed:16931514). Interacts with CLCC1 (By similarity).</text>
</comment>
<comment type="interaction">
    <interactant intactId="EBI-644340">
        <id>P14211</id>
    </interactant>
    <interactant intactId="EBI-78814">
        <id>P12023</id>
        <label>App</label>
    </interactant>
    <organismsDiffer>false</organismsDiffer>
    <experiments>4</experiments>
</comment>
<comment type="interaction">
    <interactant intactId="EBI-644340">
        <id>P14211</id>
    </interactant>
    <interactant intactId="EBI-998934">
        <id>P57716</id>
        <label>Ncstn</label>
    </interactant>
    <organismsDiffer>false</organismsDiffer>
    <experiments>2</experiments>
</comment>
<comment type="interaction">
    <interactant intactId="EBI-644340">
        <id>P14211</id>
    </interactant>
    <interactant intactId="EBI-990067">
        <id>P49769</id>
        <label>Psen1</label>
    </interactant>
    <organismsDiffer>false</organismsDiffer>
    <experiments>3</experiments>
</comment>
<comment type="subcellular location">
    <subcellularLocation>
        <location evidence="14">Endoplasmic reticulum lumen</location>
    </subcellularLocation>
    <subcellularLocation>
        <location evidence="3">Cytoplasm</location>
        <location evidence="3">Cytosol</location>
    </subcellularLocation>
    <subcellularLocation>
        <location evidence="14">Cytolytic granule</location>
    </subcellularLocation>
    <subcellularLocation>
        <location evidence="3">Secreted</location>
        <location evidence="3">Extracellular space</location>
        <location evidence="3">Extracellular matrix</location>
    </subcellularLocation>
    <subcellularLocation>
        <location evidence="3">Cell surface</location>
    </subcellularLocation>
    <subcellularLocation>
        <location evidence="4">Sarcoplasmic reticulum lumen</location>
    </subcellularLocation>
    <subcellularLocation>
        <location>Cytoplasmic vesicle</location>
        <location>Secretory vesicle</location>
        <location>Cortical granule</location>
    </subcellularLocation>
    <text evidence="3 4 5">Also found in cell surface (T cells), cytosol and extracellular matrix. During oocyte maturation and after parthenogenetic activation accumulates in cortical granules. In pronuclear and early cleaved embryos localizes weakly to cytoplasm around nucleus and more strongly in the region near the cortex (By similarity). In cortical granules of non-activated oocytes, is exocytosed during the cortical reaction in response to oocyte activation (By similarity).</text>
</comment>
<comment type="domain">
    <text evidence="1">Can be divided into a N-terminal globular domain, a proline-rich P-domain forming an elongated arm-like structure and a C-terminal acidic domain. The P-domain binds one molecule of calcium with high affinity, whereas the acidic C-domain binds multiple calcium ions with low affinity (By similarity).</text>
</comment>
<comment type="domain">
    <text evidence="1">The interaction with glycans occurs through a binding site in the globular lectin domain.</text>
</comment>
<comment type="domain">
    <text evidence="1">The zinc binding sites are localized to the N-domain.</text>
</comment>
<comment type="domain">
    <text evidence="1">Associates with PDIA3 through the tip of the extended arm formed by the P-domain.</text>
</comment>
<comment type="similarity">
    <text evidence="15">Belongs to the calreticulin family.</text>
</comment>
<proteinExistence type="evidence at protein level"/>
<dbReference type="EMBL" id="X14926">
    <property type="protein sequence ID" value="CAA33053.1"/>
    <property type="molecule type" value="mRNA"/>
</dbReference>
<dbReference type="EMBL" id="M92988">
    <property type="protein sequence ID" value="AAA37569.1"/>
    <property type="molecule type" value="mRNA"/>
</dbReference>
<dbReference type="EMBL" id="AK075605">
    <property type="protein sequence ID" value="BAC35852.1"/>
    <property type="molecule type" value="mRNA"/>
</dbReference>
<dbReference type="EMBL" id="AK160197">
    <property type="protein sequence ID" value="BAE35687.1"/>
    <property type="molecule type" value="mRNA"/>
</dbReference>
<dbReference type="EMBL" id="BC003453">
    <property type="protein sequence ID" value="AAH03453.1"/>
    <property type="molecule type" value="mRNA"/>
</dbReference>
<dbReference type="CCDS" id="CCDS22479.1"/>
<dbReference type="PIR" id="S06763">
    <property type="entry name" value="S06763"/>
</dbReference>
<dbReference type="RefSeq" id="NP_031617.1">
    <property type="nucleotide sequence ID" value="NM_007591.3"/>
</dbReference>
<dbReference type="PDB" id="3O0V">
    <property type="method" value="X-ray"/>
    <property type="resolution" value="2.30 A"/>
    <property type="chains" value="A=18-206, A=301-368"/>
</dbReference>
<dbReference type="PDB" id="3O0W">
    <property type="method" value="X-ray"/>
    <property type="resolution" value="1.95 A"/>
    <property type="chains" value="A=18-206, A=301-368"/>
</dbReference>
<dbReference type="PDB" id="3O0X">
    <property type="method" value="X-ray"/>
    <property type="resolution" value="2.01 A"/>
    <property type="chains" value="A/B=18-206, A/B=301-368"/>
</dbReference>
<dbReference type="PDB" id="3RG0">
    <property type="method" value="X-ray"/>
    <property type="resolution" value="2.57 A"/>
    <property type="chains" value="A=18-238, A=273-368"/>
</dbReference>
<dbReference type="PDBsum" id="3O0V"/>
<dbReference type="PDBsum" id="3O0W"/>
<dbReference type="PDBsum" id="3O0X"/>
<dbReference type="PDBsum" id="3RG0"/>
<dbReference type="BMRB" id="P14211"/>
<dbReference type="SMR" id="P14211"/>
<dbReference type="BioGRID" id="198458">
    <property type="interactions" value="38"/>
</dbReference>
<dbReference type="FunCoup" id="P14211">
    <property type="interactions" value="2835"/>
</dbReference>
<dbReference type="IntAct" id="P14211">
    <property type="interactions" value="13"/>
</dbReference>
<dbReference type="MINT" id="P14211"/>
<dbReference type="STRING" id="10090.ENSMUSP00000003912"/>
<dbReference type="UniLectin" id="P14211"/>
<dbReference type="CarbonylDB" id="P14211"/>
<dbReference type="GlyConnect" id="2175">
    <property type="glycosylation" value="1 N-Linked glycan (1 site)"/>
</dbReference>
<dbReference type="GlyCosmos" id="P14211">
    <property type="glycosylation" value="1 site, 1 glycan"/>
</dbReference>
<dbReference type="GlyGen" id="P14211">
    <property type="glycosylation" value="2 sites, 1 N-linked glycan (1 site), 1 O-linked glycan (1 site)"/>
</dbReference>
<dbReference type="iPTMnet" id="P14211"/>
<dbReference type="PhosphoSitePlus" id="P14211"/>
<dbReference type="SwissPalm" id="P14211"/>
<dbReference type="REPRODUCTION-2DPAGE" id="IPI00123639"/>
<dbReference type="REPRODUCTION-2DPAGE" id="P14211"/>
<dbReference type="CPTAC" id="non-CPTAC-3966"/>
<dbReference type="jPOST" id="P14211"/>
<dbReference type="PaxDb" id="10090-ENSMUSP00000003912"/>
<dbReference type="PeptideAtlas" id="P14211"/>
<dbReference type="ProteomicsDB" id="265512"/>
<dbReference type="Pumba" id="P14211"/>
<dbReference type="TopDownProteomics" id="P14211"/>
<dbReference type="Antibodypedia" id="1028">
    <property type="antibodies" value="1150 antibodies from 47 providers"/>
</dbReference>
<dbReference type="DNASU" id="12317"/>
<dbReference type="Ensembl" id="ENSMUST00000003912.7">
    <property type="protein sequence ID" value="ENSMUSP00000003912.7"/>
    <property type="gene ID" value="ENSMUSG00000003814.9"/>
</dbReference>
<dbReference type="GeneID" id="12317"/>
<dbReference type="KEGG" id="mmu:12317"/>
<dbReference type="UCSC" id="uc009mnp.1">
    <property type="organism name" value="mouse"/>
</dbReference>
<dbReference type="AGR" id="MGI:88252"/>
<dbReference type="CTD" id="811"/>
<dbReference type="MGI" id="MGI:88252">
    <property type="gene designation" value="Calr"/>
</dbReference>
<dbReference type="VEuPathDB" id="HostDB:ENSMUSG00000003814"/>
<dbReference type="eggNOG" id="KOG0674">
    <property type="taxonomic scope" value="Eukaryota"/>
</dbReference>
<dbReference type="GeneTree" id="ENSGT00950000182915"/>
<dbReference type="HOGENOM" id="CLU_018224_0_2_1"/>
<dbReference type="InParanoid" id="P14211"/>
<dbReference type="OMA" id="KRDEICA"/>
<dbReference type="OrthoDB" id="1938156at2759"/>
<dbReference type="PhylomeDB" id="P14211"/>
<dbReference type="TreeFam" id="TF338438"/>
<dbReference type="Reactome" id="R-MMU-1236974">
    <property type="pathway name" value="ER-Phagosome pathway"/>
</dbReference>
<dbReference type="Reactome" id="R-MMU-3000480">
    <property type="pathway name" value="Scavenging by Class A Receptors"/>
</dbReference>
<dbReference type="Reactome" id="R-MMU-901042">
    <property type="pathway name" value="Calnexin/calreticulin cycle"/>
</dbReference>
<dbReference type="Reactome" id="R-MMU-983170">
    <property type="pathway name" value="Antigen Presentation: Folding, assembly and peptide loading of class I MHC"/>
</dbReference>
<dbReference type="BioGRID-ORCS" id="12317">
    <property type="hits" value="13 hits in 82 CRISPR screens"/>
</dbReference>
<dbReference type="ChiTaRS" id="Calr">
    <property type="organism name" value="mouse"/>
</dbReference>
<dbReference type="EvolutionaryTrace" id="P14211"/>
<dbReference type="PRO" id="PR:P14211"/>
<dbReference type="Proteomes" id="UP000000589">
    <property type="component" value="Chromosome 8"/>
</dbReference>
<dbReference type="RNAct" id="P14211">
    <property type="molecule type" value="protein"/>
</dbReference>
<dbReference type="Bgee" id="ENSMUSG00000003814">
    <property type="expression patterns" value="Expressed in ectoplacental cone and 247 other cell types or tissues"/>
</dbReference>
<dbReference type="ExpressionAtlas" id="P14211">
    <property type="expression patterns" value="baseline and differential"/>
</dbReference>
<dbReference type="GO" id="GO:0001669">
    <property type="term" value="C:acrosomal vesicle"/>
    <property type="evidence" value="ECO:0007669"/>
    <property type="project" value="Ensembl"/>
</dbReference>
<dbReference type="GO" id="GO:0060473">
    <property type="term" value="C:cortical granule"/>
    <property type="evidence" value="ECO:0000250"/>
    <property type="project" value="UniProtKB"/>
</dbReference>
<dbReference type="GO" id="GO:0044194">
    <property type="term" value="C:cytolytic granule"/>
    <property type="evidence" value="ECO:0007669"/>
    <property type="project" value="UniProtKB-SubCell"/>
</dbReference>
<dbReference type="GO" id="GO:0005829">
    <property type="term" value="C:cytosol"/>
    <property type="evidence" value="ECO:0007669"/>
    <property type="project" value="UniProtKB-SubCell"/>
</dbReference>
<dbReference type="GO" id="GO:0005783">
    <property type="term" value="C:endoplasmic reticulum"/>
    <property type="evidence" value="ECO:0000314"/>
    <property type="project" value="MGI"/>
</dbReference>
<dbReference type="GO" id="GO:0005788">
    <property type="term" value="C:endoplasmic reticulum lumen"/>
    <property type="evidence" value="ECO:0000314"/>
    <property type="project" value="MGI"/>
</dbReference>
<dbReference type="GO" id="GO:0044322">
    <property type="term" value="C:endoplasmic reticulum quality control compartment"/>
    <property type="evidence" value="ECO:0000314"/>
    <property type="project" value="UniProtKB"/>
</dbReference>
<dbReference type="GO" id="GO:0009897">
    <property type="term" value="C:external side of plasma membrane"/>
    <property type="evidence" value="ECO:0000314"/>
    <property type="project" value="MGI"/>
</dbReference>
<dbReference type="GO" id="GO:0005576">
    <property type="term" value="C:extracellular region"/>
    <property type="evidence" value="ECO:0000304"/>
    <property type="project" value="Reactome"/>
</dbReference>
<dbReference type="GO" id="GO:0005615">
    <property type="term" value="C:extracellular space"/>
    <property type="evidence" value="ECO:0000314"/>
    <property type="project" value="MGI"/>
</dbReference>
<dbReference type="GO" id="GO:0098978">
    <property type="term" value="C:glutamatergic synapse"/>
    <property type="evidence" value="ECO:0007669"/>
    <property type="project" value="Ensembl"/>
</dbReference>
<dbReference type="GO" id="GO:0016020">
    <property type="term" value="C:membrane"/>
    <property type="evidence" value="ECO:0000266"/>
    <property type="project" value="MGI"/>
</dbReference>
<dbReference type="GO" id="GO:0042824">
    <property type="term" value="C:MHC class I peptide loading complex"/>
    <property type="evidence" value="ECO:0000315"/>
    <property type="project" value="BHF-UCL"/>
</dbReference>
<dbReference type="GO" id="GO:0005739">
    <property type="term" value="C:mitochondrion"/>
    <property type="evidence" value="ECO:0007669"/>
    <property type="project" value="Ensembl"/>
</dbReference>
<dbReference type="GO" id="GO:0005635">
    <property type="term" value="C:nuclear envelope"/>
    <property type="evidence" value="ECO:0007669"/>
    <property type="project" value="Ensembl"/>
</dbReference>
<dbReference type="GO" id="GO:0048471">
    <property type="term" value="C:perinuclear region of cytoplasm"/>
    <property type="evidence" value="ECO:0007669"/>
    <property type="project" value="Ensembl"/>
</dbReference>
<dbReference type="GO" id="GO:0045335">
    <property type="term" value="C:phagocytic vesicle"/>
    <property type="evidence" value="ECO:0000304"/>
    <property type="project" value="Reactome"/>
</dbReference>
<dbReference type="GO" id="GO:0098794">
    <property type="term" value="C:postsynapse"/>
    <property type="evidence" value="ECO:0007669"/>
    <property type="project" value="Ensembl"/>
</dbReference>
<dbReference type="GO" id="GO:0005840">
    <property type="term" value="C:ribosome"/>
    <property type="evidence" value="ECO:0007669"/>
    <property type="project" value="Ensembl"/>
</dbReference>
<dbReference type="GO" id="GO:0033018">
    <property type="term" value="C:sarcoplasmic reticulum lumen"/>
    <property type="evidence" value="ECO:0007669"/>
    <property type="project" value="UniProtKB-SubCell"/>
</dbReference>
<dbReference type="GO" id="GO:0005790">
    <property type="term" value="C:smooth endoplasmic reticulum"/>
    <property type="evidence" value="ECO:0007669"/>
    <property type="project" value="Ensembl"/>
</dbReference>
<dbReference type="GO" id="GO:0005509">
    <property type="term" value="F:calcium ion binding"/>
    <property type="evidence" value="ECO:0000314"/>
    <property type="project" value="UniProtKB"/>
</dbReference>
<dbReference type="GO" id="GO:0030246">
    <property type="term" value="F:carbohydrate binding"/>
    <property type="evidence" value="ECO:0000314"/>
    <property type="project" value="UniProtKB"/>
</dbReference>
<dbReference type="GO" id="GO:0001849">
    <property type="term" value="F:complement component C1q complex binding"/>
    <property type="evidence" value="ECO:0007669"/>
    <property type="project" value="Ensembl"/>
</dbReference>
<dbReference type="GO" id="GO:0042562">
    <property type="term" value="F:hormone binding"/>
    <property type="evidence" value="ECO:0007669"/>
    <property type="project" value="Ensembl"/>
</dbReference>
<dbReference type="GO" id="GO:0005178">
    <property type="term" value="F:integrin binding"/>
    <property type="evidence" value="ECO:0007669"/>
    <property type="project" value="Ensembl"/>
</dbReference>
<dbReference type="GO" id="GO:0005506">
    <property type="term" value="F:iron ion binding"/>
    <property type="evidence" value="ECO:0007669"/>
    <property type="project" value="Ensembl"/>
</dbReference>
<dbReference type="GO" id="GO:0140313">
    <property type="term" value="F:molecular sequestering activity"/>
    <property type="evidence" value="ECO:0007669"/>
    <property type="project" value="Ensembl"/>
</dbReference>
<dbReference type="GO" id="GO:0003729">
    <property type="term" value="F:mRNA binding"/>
    <property type="evidence" value="ECO:0000314"/>
    <property type="project" value="BHF-UCL"/>
</dbReference>
<dbReference type="GO" id="GO:0050681">
    <property type="term" value="F:nuclear androgen receptor binding"/>
    <property type="evidence" value="ECO:0007669"/>
    <property type="project" value="Ensembl"/>
</dbReference>
<dbReference type="GO" id="GO:0005049">
    <property type="term" value="F:nuclear export signal receptor activity"/>
    <property type="evidence" value="ECO:0007669"/>
    <property type="project" value="Ensembl"/>
</dbReference>
<dbReference type="GO" id="GO:0042277">
    <property type="term" value="F:peptide binding"/>
    <property type="evidence" value="ECO:0007669"/>
    <property type="project" value="Ensembl"/>
</dbReference>
<dbReference type="GO" id="GO:0044183">
    <property type="term" value="F:protein folding chaperone"/>
    <property type="evidence" value="ECO:0007669"/>
    <property type="project" value="Ensembl"/>
</dbReference>
<dbReference type="GO" id="GO:0031625">
    <property type="term" value="F:ubiquitin protein ligase binding"/>
    <property type="evidence" value="ECO:0007669"/>
    <property type="project" value="Ensembl"/>
</dbReference>
<dbReference type="GO" id="GO:0051082">
    <property type="term" value="F:unfolded protein binding"/>
    <property type="evidence" value="ECO:0007669"/>
    <property type="project" value="InterPro"/>
</dbReference>
<dbReference type="GO" id="GO:0055007">
    <property type="term" value="P:cardiac muscle cell differentiation"/>
    <property type="evidence" value="ECO:0007669"/>
    <property type="project" value="Ensembl"/>
</dbReference>
<dbReference type="GO" id="GO:0071257">
    <property type="term" value="P:cellular response to electrical stimulus"/>
    <property type="evidence" value="ECO:0007669"/>
    <property type="project" value="Ensembl"/>
</dbReference>
<dbReference type="GO" id="GO:0071285">
    <property type="term" value="P:cellular response to lithium ion"/>
    <property type="evidence" value="ECO:0007669"/>
    <property type="project" value="Ensembl"/>
</dbReference>
<dbReference type="GO" id="GO:0098586">
    <property type="term" value="P:cellular response to virus"/>
    <property type="evidence" value="ECO:0007669"/>
    <property type="project" value="Ensembl"/>
</dbReference>
<dbReference type="GO" id="GO:0090398">
    <property type="term" value="P:cellular senescence"/>
    <property type="evidence" value="ECO:0000315"/>
    <property type="project" value="BHF-UCL"/>
</dbReference>
<dbReference type="GO" id="GO:0030866">
    <property type="term" value="P:cortical actin cytoskeleton organization"/>
    <property type="evidence" value="ECO:0000314"/>
    <property type="project" value="MGI"/>
</dbReference>
<dbReference type="GO" id="GO:0033144">
    <property type="term" value="P:negative regulation of intracellular steroid hormone receptor signaling pathway"/>
    <property type="evidence" value="ECO:0007669"/>
    <property type="project" value="Ensembl"/>
</dbReference>
<dbReference type="GO" id="GO:0045665">
    <property type="term" value="P:negative regulation of neuron differentiation"/>
    <property type="evidence" value="ECO:0007669"/>
    <property type="project" value="Ensembl"/>
</dbReference>
<dbReference type="GO" id="GO:0048387">
    <property type="term" value="P:negative regulation of retinoic acid receptor signaling pathway"/>
    <property type="evidence" value="ECO:0007669"/>
    <property type="project" value="Ensembl"/>
</dbReference>
<dbReference type="GO" id="GO:0000122">
    <property type="term" value="P:negative regulation of transcription by RNA polymerase II"/>
    <property type="evidence" value="ECO:0007669"/>
    <property type="project" value="Ensembl"/>
</dbReference>
<dbReference type="GO" id="GO:0017148">
    <property type="term" value="P:negative regulation of translation"/>
    <property type="evidence" value="ECO:0007669"/>
    <property type="project" value="Ensembl"/>
</dbReference>
<dbReference type="GO" id="GO:1901164">
    <property type="term" value="P:negative regulation of trophoblast cell migration"/>
    <property type="evidence" value="ECO:0007669"/>
    <property type="project" value="Ensembl"/>
</dbReference>
<dbReference type="GO" id="GO:0002502">
    <property type="term" value="P:peptide antigen assembly with MHC class I protein complex"/>
    <property type="evidence" value="ECO:0000315"/>
    <property type="project" value="BHF-UCL"/>
</dbReference>
<dbReference type="GO" id="GO:0045787">
    <property type="term" value="P:positive regulation of cell cycle"/>
    <property type="evidence" value="ECO:0000315"/>
    <property type="project" value="BHF-UCL"/>
</dbReference>
<dbReference type="GO" id="GO:0008284">
    <property type="term" value="P:positive regulation of cell population proliferation"/>
    <property type="evidence" value="ECO:0007669"/>
    <property type="project" value="Ensembl"/>
</dbReference>
<dbReference type="GO" id="GO:2000510">
    <property type="term" value="P:positive regulation of dendritic cell chemotaxis"/>
    <property type="evidence" value="ECO:0007669"/>
    <property type="project" value="Ensembl"/>
</dbReference>
<dbReference type="GO" id="GO:0010595">
    <property type="term" value="P:positive regulation of endothelial cell migration"/>
    <property type="evidence" value="ECO:0007669"/>
    <property type="project" value="Ensembl"/>
</dbReference>
<dbReference type="GO" id="GO:0010628">
    <property type="term" value="P:positive regulation of gene expression"/>
    <property type="evidence" value="ECO:0000315"/>
    <property type="project" value="UniProtKB"/>
</dbReference>
<dbReference type="GO" id="GO:1901224">
    <property type="term" value="P:positive regulation of non-canonical NF-kappaB signal transduction"/>
    <property type="evidence" value="ECO:0000315"/>
    <property type="project" value="MGI"/>
</dbReference>
<dbReference type="GO" id="GO:0050766">
    <property type="term" value="P:positive regulation of phagocytosis"/>
    <property type="evidence" value="ECO:0000315"/>
    <property type="project" value="BHF-UCL"/>
</dbReference>
<dbReference type="GO" id="GO:1900026">
    <property type="term" value="P:positive regulation of substrate adhesion-dependent cell spreading"/>
    <property type="evidence" value="ECO:0007669"/>
    <property type="project" value="Ensembl"/>
</dbReference>
<dbReference type="GO" id="GO:0006611">
    <property type="term" value="P:protein export from nucleus"/>
    <property type="evidence" value="ECO:0007669"/>
    <property type="project" value="Ensembl"/>
</dbReference>
<dbReference type="GO" id="GO:0034504">
    <property type="term" value="P:protein localization to nucleus"/>
    <property type="evidence" value="ECO:0000315"/>
    <property type="project" value="UniProtKB"/>
</dbReference>
<dbReference type="GO" id="GO:0050821">
    <property type="term" value="P:protein stabilization"/>
    <property type="evidence" value="ECO:0000314"/>
    <property type="project" value="UniProtKB"/>
</dbReference>
<dbReference type="GO" id="GO:0040020">
    <property type="term" value="P:regulation of meiotic nuclear division"/>
    <property type="evidence" value="ECO:0000314"/>
    <property type="project" value="MGI"/>
</dbReference>
<dbReference type="GO" id="GO:1904614">
    <property type="term" value="P:response to biphenyl"/>
    <property type="evidence" value="ECO:0007669"/>
    <property type="project" value="Ensembl"/>
</dbReference>
<dbReference type="GO" id="GO:0032355">
    <property type="term" value="P:response to estradiol"/>
    <property type="evidence" value="ECO:0007669"/>
    <property type="project" value="Ensembl"/>
</dbReference>
<dbReference type="GO" id="GO:1903416">
    <property type="term" value="P:response to glycoside"/>
    <property type="evidence" value="ECO:0007669"/>
    <property type="project" value="Ensembl"/>
</dbReference>
<dbReference type="GO" id="GO:1901652">
    <property type="term" value="P:response to peptide"/>
    <property type="evidence" value="ECO:0007669"/>
    <property type="project" value="Ensembl"/>
</dbReference>
<dbReference type="GO" id="GO:0033574">
    <property type="term" value="P:response to testosterone"/>
    <property type="evidence" value="ECO:0007669"/>
    <property type="project" value="Ensembl"/>
</dbReference>
<dbReference type="GO" id="GO:0009410">
    <property type="term" value="P:response to xenobiotic stimulus"/>
    <property type="evidence" value="ECO:0007669"/>
    <property type="project" value="Ensembl"/>
</dbReference>
<dbReference type="GO" id="GO:0007283">
    <property type="term" value="P:spermatogenesis"/>
    <property type="evidence" value="ECO:0007669"/>
    <property type="project" value="Ensembl"/>
</dbReference>
<dbReference type="FunFam" id="2.10.250.10:FF:000002">
    <property type="entry name" value="Calreticulin"/>
    <property type="match status" value="1"/>
</dbReference>
<dbReference type="FunFam" id="2.60.120.200:FF:000122">
    <property type="entry name" value="Calreticulin 3"/>
    <property type="match status" value="1"/>
</dbReference>
<dbReference type="Gene3D" id="2.60.120.200">
    <property type="match status" value="1"/>
</dbReference>
<dbReference type="Gene3D" id="2.10.250.10">
    <property type="entry name" value="Calreticulin/calnexin, P domain"/>
    <property type="match status" value="1"/>
</dbReference>
<dbReference type="InterPro" id="IPR001580">
    <property type="entry name" value="Calret/calnex"/>
</dbReference>
<dbReference type="InterPro" id="IPR018124">
    <property type="entry name" value="Calret/calnex_CS"/>
</dbReference>
<dbReference type="InterPro" id="IPR009169">
    <property type="entry name" value="Calreticulin"/>
</dbReference>
<dbReference type="InterPro" id="IPR009033">
    <property type="entry name" value="Calreticulin/calnexin_P_dom_sf"/>
</dbReference>
<dbReference type="InterPro" id="IPR013320">
    <property type="entry name" value="ConA-like_dom_sf"/>
</dbReference>
<dbReference type="PANTHER" id="PTHR11073:SF16">
    <property type="entry name" value="CALRETICULIN"/>
    <property type="match status" value="1"/>
</dbReference>
<dbReference type="PANTHER" id="PTHR11073">
    <property type="entry name" value="CALRETICULIN AND CALNEXIN"/>
    <property type="match status" value="1"/>
</dbReference>
<dbReference type="Pfam" id="PF00262">
    <property type="entry name" value="Calreticulin"/>
    <property type="match status" value="2"/>
</dbReference>
<dbReference type="PIRSF" id="PIRSF002356">
    <property type="entry name" value="Calreticulin"/>
    <property type="match status" value="1"/>
</dbReference>
<dbReference type="PRINTS" id="PR00626">
    <property type="entry name" value="CALRETICULIN"/>
</dbReference>
<dbReference type="SUPFAM" id="SSF49899">
    <property type="entry name" value="Concanavalin A-like lectins/glucanases"/>
    <property type="match status" value="1"/>
</dbReference>
<dbReference type="SUPFAM" id="SSF63887">
    <property type="entry name" value="P-domain of calnexin/calreticulin"/>
    <property type="match status" value="1"/>
</dbReference>
<dbReference type="PROSITE" id="PS00803">
    <property type="entry name" value="CALRETICULIN_1"/>
    <property type="match status" value="1"/>
</dbReference>
<dbReference type="PROSITE" id="PS00804">
    <property type="entry name" value="CALRETICULIN_2"/>
    <property type="match status" value="1"/>
</dbReference>
<dbReference type="PROSITE" id="PS00805">
    <property type="entry name" value="CALRETICULIN_REPEAT"/>
    <property type="match status" value="3"/>
</dbReference>
<dbReference type="PROSITE" id="PS00014">
    <property type="entry name" value="ER_TARGET"/>
    <property type="match status" value="1"/>
</dbReference>
<accession>P14211</accession>
<accession>Q3TVD2</accession>
<keyword id="KW-0002">3D-structure</keyword>
<keyword id="KW-0007">Acetylation</keyword>
<keyword id="KW-0106">Calcium</keyword>
<keyword id="KW-0143">Chaperone</keyword>
<keyword id="KW-0963">Cytoplasm</keyword>
<keyword id="KW-0968">Cytoplasmic vesicle</keyword>
<keyword id="KW-0903">Direct protein sequencing</keyword>
<keyword id="KW-1015">Disulfide bond</keyword>
<keyword id="KW-0256">Endoplasmic reticulum</keyword>
<keyword id="KW-0272">Extracellular matrix</keyword>
<keyword id="KW-0379">Hydroxylation</keyword>
<keyword id="KW-0430">Lectin</keyword>
<keyword id="KW-0458">Lysosome</keyword>
<keyword id="KW-0479">Metal-binding</keyword>
<keyword id="KW-1185">Reference proteome</keyword>
<keyword id="KW-0677">Repeat</keyword>
<keyword id="KW-0703">Sarcoplasmic reticulum</keyword>
<keyword id="KW-0964">Secreted</keyword>
<keyword id="KW-0732">Signal</keyword>
<keyword id="KW-0862">Zinc</keyword>
<organism>
    <name type="scientific">Mus musculus</name>
    <name type="common">Mouse</name>
    <dbReference type="NCBI Taxonomy" id="10090"/>
    <lineage>
        <taxon>Eukaryota</taxon>
        <taxon>Metazoa</taxon>
        <taxon>Chordata</taxon>
        <taxon>Craniata</taxon>
        <taxon>Vertebrata</taxon>
        <taxon>Euteleostomi</taxon>
        <taxon>Mammalia</taxon>
        <taxon>Eutheria</taxon>
        <taxon>Euarchontoglires</taxon>
        <taxon>Glires</taxon>
        <taxon>Rodentia</taxon>
        <taxon>Myomorpha</taxon>
        <taxon>Muroidea</taxon>
        <taxon>Muridae</taxon>
        <taxon>Murinae</taxon>
        <taxon>Mus</taxon>
        <taxon>Mus</taxon>
    </lineage>
</organism>
<gene>
    <name type="primary">Calr</name>
</gene>
<sequence>MLLSVPLLLGLLGLAAADPAIYFKEQFLDGDAWTNRWVESKHKSDFGKFVLSSGKFYGDLEKDKGLQTSQDARFYALSAKFEPFSNKGQTLVVQFTVKHEQNIDCGGGYVKLFPSGLDQKDMHGDSEYNIMFGPDICGPGTKKVHVIFNYKGKNVLINKDIRCKDDEFTHLYTLIVRPDNTYEVKIDNSQVESGSLEDDWDFLPPKKIKDPDAAKPEDWDERAKIDDPTDSKPEDWDKPEHIPDPDAKKPEDWDEEMDGEWEPPVIQNPEYKGEWKPRQIDNPDYKGTWIHPEIDNPEYSPDANIYAYDSFAVLGLDLWQVKSGTIFDNFLITNDEAYAEEFGNETWGVTKAAEKQMKDKQDEEQRLKEEEEDKKRKEEEEAEDKEDDDDRDEDEDEEDEKEEDEEESPGQAKDEL</sequence>
<reference key="1">
    <citation type="journal article" date="1989" name="EMBO J.">
        <title>Multiple zones in the sequence of calreticulin (CRP55, calregulin, HACBP), a major calcium binding ER/SR protein.</title>
        <authorList>
            <person name="Smith M.J."/>
            <person name="Koch G.L.E."/>
        </authorList>
    </citation>
    <scope>NUCLEOTIDE SEQUENCE [MRNA]</scope>
    <scope>PROTEIN SEQUENCE OF 18-48 AND 129-161</scope>
    <source>
        <strain>BALB/cJ</strain>
        <tissue>Liver</tissue>
    </source>
</reference>
<reference key="2">
    <citation type="journal article" date="1992" name="Gene">
        <title>Determination of the sequence of an expressible cDNA clone encoding ERp60/calregulin by the use of a novel nested set method.</title>
        <authorList>
            <person name="Mazzarella R.A."/>
            <person name="Gold P."/>
            <person name="Cunningham M."/>
            <person name="Green M."/>
        </authorList>
    </citation>
    <scope>NUCLEOTIDE SEQUENCE [MRNA]</scope>
</reference>
<reference key="3">
    <citation type="journal article" date="2005" name="Science">
        <title>The transcriptional landscape of the mammalian genome.</title>
        <authorList>
            <person name="Carninci P."/>
            <person name="Kasukawa T."/>
            <person name="Katayama S."/>
            <person name="Gough J."/>
            <person name="Frith M.C."/>
            <person name="Maeda N."/>
            <person name="Oyama R."/>
            <person name="Ravasi T."/>
            <person name="Lenhard B."/>
            <person name="Wells C."/>
            <person name="Kodzius R."/>
            <person name="Shimokawa K."/>
            <person name="Bajic V.B."/>
            <person name="Brenner S.E."/>
            <person name="Batalov S."/>
            <person name="Forrest A.R."/>
            <person name="Zavolan M."/>
            <person name="Davis M.J."/>
            <person name="Wilming L.G."/>
            <person name="Aidinis V."/>
            <person name="Allen J.E."/>
            <person name="Ambesi-Impiombato A."/>
            <person name="Apweiler R."/>
            <person name="Aturaliya R.N."/>
            <person name="Bailey T.L."/>
            <person name="Bansal M."/>
            <person name="Baxter L."/>
            <person name="Beisel K.W."/>
            <person name="Bersano T."/>
            <person name="Bono H."/>
            <person name="Chalk A.M."/>
            <person name="Chiu K.P."/>
            <person name="Choudhary V."/>
            <person name="Christoffels A."/>
            <person name="Clutterbuck D.R."/>
            <person name="Crowe M.L."/>
            <person name="Dalla E."/>
            <person name="Dalrymple B.P."/>
            <person name="de Bono B."/>
            <person name="Della Gatta G."/>
            <person name="di Bernardo D."/>
            <person name="Down T."/>
            <person name="Engstrom P."/>
            <person name="Fagiolini M."/>
            <person name="Faulkner G."/>
            <person name="Fletcher C.F."/>
            <person name="Fukushima T."/>
            <person name="Furuno M."/>
            <person name="Futaki S."/>
            <person name="Gariboldi M."/>
            <person name="Georgii-Hemming P."/>
            <person name="Gingeras T.R."/>
            <person name="Gojobori T."/>
            <person name="Green R.E."/>
            <person name="Gustincich S."/>
            <person name="Harbers M."/>
            <person name="Hayashi Y."/>
            <person name="Hensch T.K."/>
            <person name="Hirokawa N."/>
            <person name="Hill D."/>
            <person name="Huminiecki L."/>
            <person name="Iacono M."/>
            <person name="Ikeo K."/>
            <person name="Iwama A."/>
            <person name="Ishikawa T."/>
            <person name="Jakt M."/>
            <person name="Kanapin A."/>
            <person name="Katoh M."/>
            <person name="Kawasawa Y."/>
            <person name="Kelso J."/>
            <person name="Kitamura H."/>
            <person name="Kitano H."/>
            <person name="Kollias G."/>
            <person name="Krishnan S.P."/>
            <person name="Kruger A."/>
            <person name="Kummerfeld S.K."/>
            <person name="Kurochkin I.V."/>
            <person name="Lareau L.F."/>
            <person name="Lazarevic D."/>
            <person name="Lipovich L."/>
            <person name="Liu J."/>
            <person name="Liuni S."/>
            <person name="McWilliam S."/>
            <person name="Madan Babu M."/>
            <person name="Madera M."/>
            <person name="Marchionni L."/>
            <person name="Matsuda H."/>
            <person name="Matsuzawa S."/>
            <person name="Miki H."/>
            <person name="Mignone F."/>
            <person name="Miyake S."/>
            <person name="Morris K."/>
            <person name="Mottagui-Tabar S."/>
            <person name="Mulder N."/>
            <person name="Nakano N."/>
            <person name="Nakauchi H."/>
            <person name="Ng P."/>
            <person name="Nilsson R."/>
            <person name="Nishiguchi S."/>
            <person name="Nishikawa S."/>
            <person name="Nori F."/>
            <person name="Ohara O."/>
            <person name="Okazaki Y."/>
            <person name="Orlando V."/>
            <person name="Pang K.C."/>
            <person name="Pavan W.J."/>
            <person name="Pavesi G."/>
            <person name="Pesole G."/>
            <person name="Petrovsky N."/>
            <person name="Piazza S."/>
            <person name="Reed J."/>
            <person name="Reid J.F."/>
            <person name="Ring B.Z."/>
            <person name="Ringwald M."/>
            <person name="Rost B."/>
            <person name="Ruan Y."/>
            <person name="Salzberg S.L."/>
            <person name="Sandelin A."/>
            <person name="Schneider C."/>
            <person name="Schoenbach C."/>
            <person name="Sekiguchi K."/>
            <person name="Semple C.A."/>
            <person name="Seno S."/>
            <person name="Sessa L."/>
            <person name="Sheng Y."/>
            <person name="Shibata Y."/>
            <person name="Shimada H."/>
            <person name="Shimada K."/>
            <person name="Silva D."/>
            <person name="Sinclair B."/>
            <person name="Sperling S."/>
            <person name="Stupka E."/>
            <person name="Sugiura K."/>
            <person name="Sultana R."/>
            <person name="Takenaka Y."/>
            <person name="Taki K."/>
            <person name="Tammoja K."/>
            <person name="Tan S.L."/>
            <person name="Tang S."/>
            <person name="Taylor M.S."/>
            <person name="Tegner J."/>
            <person name="Teichmann S.A."/>
            <person name="Ueda H.R."/>
            <person name="van Nimwegen E."/>
            <person name="Verardo R."/>
            <person name="Wei C.L."/>
            <person name="Yagi K."/>
            <person name="Yamanishi H."/>
            <person name="Zabarovsky E."/>
            <person name="Zhu S."/>
            <person name="Zimmer A."/>
            <person name="Hide W."/>
            <person name="Bult C."/>
            <person name="Grimmond S.M."/>
            <person name="Teasdale R.D."/>
            <person name="Liu E.T."/>
            <person name="Brusic V."/>
            <person name="Quackenbush J."/>
            <person name="Wahlestedt C."/>
            <person name="Mattick J.S."/>
            <person name="Hume D.A."/>
            <person name="Kai C."/>
            <person name="Sasaki D."/>
            <person name="Tomaru Y."/>
            <person name="Fukuda S."/>
            <person name="Kanamori-Katayama M."/>
            <person name="Suzuki M."/>
            <person name="Aoki J."/>
            <person name="Arakawa T."/>
            <person name="Iida J."/>
            <person name="Imamura K."/>
            <person name="Itoh M."/>
            <person name="Kato T."/>
            <person name="Kawaji H."/>
            <person name="Kawagashira N."/>
            <person name="Kawashima T."/>
            <person name="Kojima M."/>
            <person name="Kondo S."/>
            <person name="Konno H."/>
            <person name="Nakano K."/>
            <person name="Ninomiya N."/>
            <person name="Nishio T."/>
            <person name="Okada M."/>
            <person name="Plessy C."/>
            <person name="Shibata K."/>
            <person name="Shiraki T."/>
            <person name="Suzuki S."/>
            <person name="Tagami M."/>
            <person name="Waki K."/>
            <person name="Watahiki A."/>
            <person name="Okamura-Oho Y."/>
            <person name="Suzuki H."/>
            <person name="Kawai J."/>
            <person name="Hayashizaki Y."/>
        </authorList>
    </citation>
    <scope>NUCLEOTIDE SEQUENCE [LARGE SCALE MRNA]</scope>
    <source>
        <strain>C57BL/6J</strain>
        <tissue>Brain</tissue>
        <tissue>Liver</tissue>
    </source>
</reference>
<reference key="4">
    <citation type="journal article" date="2004" name="Genome Res.">
        <title>The status, quality, and expansion of the NIH full-length cDNA project: the Mammalian Gene Collection (MGC).</title>
        <authorList>
            <consortium name="The MGC Project Team"/>
        </authorList>
    </citation>
    <scope>NUCLEOTIDE SEQUENCE [LARGE SCALE MRNA]</scope>
    <source>
        <strain>FVB/N-3</strain>
        <tissue>Mammary gland</tissue>
    </source>
</reference>
<reference key="5">
    <citation type="journal article" date="1994" name="Electrophoresis">
        <title>Separation and sequencing of familiar and novel murine proteins using preparative two-dimensional gel electrophoresis.</title>
        <authorList>
            <person name="Merrick B.A."/>
            <person name="Patterson R.M."/>
            <person name="Wichter L.L."/>
            <person name="He C."/>
            <person name="Selkirk J.K."/>
        </authorList>
    </citation>
    <scope>PROTEIN SEQUENCE OF 18-38</scope>
    <source>
        <tissue>Fibroblast</tissue>
    </source>
</reference>
<reference key="6">
    <citation type="submission" date="2009-01" db="UniProtKB">
        <authorList>
            <person name="Lubec G."/>
            <person name="Kang S.U."/>
            <person name="Sunyer B."/>
            <person name="Chen W.-Q."/>
        </authorList>
    </citation>
    <scope>PROTEIN SEQUENCE OF 25-36; 56-64; 74-151; 154-159; 163-222; 225-272; 323-351; 341-357 AND 392-413</scope>
    <scope>IDENTIFICATION BY MASS SPECTROMETRY</scope>
    <source>
        <strain>C57BL/6J</strain>
        <strain>OF1</strain>
        <tissue>Brain</tissue>
        <tissue>Hippocampus</tissue>
    </source>
</reference>
<reference key="7">
    <citation type="journal article" date="1993" name="J. Exp. Med.">
        <title>The calcium-binding protein calreticulin is a major constituent of lytic granules in cytolytic T lymphocytes.</title>
        <authorList>
            <person name="Dupuis M."/>
            <person name="Schaerer E."/>
            <person name="Krause K.-H."/>
            <person name="Tschopp J."/>
        </authorList>
    </citation>
    <scope>SUBCELLULAR LOCATION</scope>
</reference>
<reference key="8">
    <citation type="journal article" date="2006" name="J. Biol. Chem.">
        <title>Age-specific CUGBP1-eIF2 complex increases translation of CCAAT/enhancer-binding protein beta in old liver.</title>
        <authorList>
            <person name="Timchenko L.T."/>
            <person name="Salisbury E."/>
            <person name="Wang G.-L."/>
            <person name="Nguyen H."/>
            <person name="Albrecht J.H."/>
            <person name="Hershey J.W."/>
            <person name="Timchenko N.A."/>
        </authorList>
    </citation>
    <scope>IDENTIFICATION IN AN EIF2 COMPLEX WITH EIF2S1; EIF2S2; CELF1; CALR3; HSPA5 AND HSP90B1</scope>
</reference>
<reference key="9">
    <citation type="journal article" date="2010" name="Cell">
        <title>A tissue-specific atlas of mouse protein phosphorylation and expression.</title>
        <authorList>
            <person name="Huttlin E.L."/>
            <person name="Jedrychowski M.P."/>
            <person name="Elias J.E."/>
            <person name="Goswami T."/>
            <person name="Rad R."/>
            <person name="Beausoleil S.A."/>
            <person name="Villen J."/>
            <person name="Haas W."/>
            <person name="Sowa M.E."/>
            <person name="Gygi S.P."/>
        </authorList>
    </citation>
    <scope>IDENTIFICATION BY MASS SPECTROMETRY [LARGE SCALE ANALYSIS]</scope>
    <source>
        <tissue>Brain</tissue>
        <tissue>Brown adipose tissue</tissue>
        <tissue>Heart</tissue>
        <tissue>Kidney</tissue>
        <tissue>Liver</tissue>
        <tissue>Lung</tissue>
        <tissue>Pancreas</tissue>
        <tissue>Spleen</tissue>
        <tissue>Testis</tissue>
    </source>
</reference>
<reference key="10">
    <citation type="journal article" date="2010" name="J. Biol. Chem.">
        <title>Structural basis of cyclophilin B binding by the calnexin/calreticulin P-domain.</title>
        <authorList>
            <person name="Kozlov G."/>
            <person name="Bastos-Aristizabal S."/>
            <person name="Maattanen P."/>
            <person name="Rosenauer A."/>
            <person name="Zheng F."/>
            <person name="Killikelly A."/>
            <person name="Trempe J.F."/>
            <person name="Thomas D.Y."/>
            <person name="Gehring K."/>
        </authorList>
    </citation>
    <scope>INTERACTION WITH PPIB</scope>
</reference>
<reference key="11">
    <citation type="journal article" date="2013" name="BMC Cell Biol.">
        <title>A mouse protein that localizes to acrosome and sperm tail is regulated by Y-chromosome.</title>
        <authorList>
            <person name="Bhattacharya R."/>
            <person name="Devi M.S."/>
            <person name="Dhople V.M."/>
            <person name="Jesudasan R.A."/>
        </authorList>
    </citation>
    <scope>INTERACTION WITH SPACA9</scope>
</reference>
<reference key="12">
    <citation type="journal article" date="2013" name="Mol. Cell">
        <title>SIRT5-mediated lysine desuccinylation impacts diverse metabolic pathways.</title>
        <authorList>
            <person name="Park J."/>
            <person name="Chen Y."/>
            <person name="Tishkoff D.X."/>
            <person name="Peng C."/>
            <person name="Tan M."/>
            <person name="Dai L."/>
            <person name="Xie Z."/>
            <person name="Zhang Y."/>
            <person name="Zwaans B.M."/>
            <person name="Skinner M.E."/>
            <person name="Lombard D.B."/>
            <person name="Zhao Y."/>
        </authorList>
    </citation>
    <scope>ACETYLATION [LARGE SCALE ANALYSIS] AT LYS-209</scope>
    <scope>IDENTIFICATION BY MASS SPECTROMETRY [LARGE SCALE ANALYSIS]</scope>
    <source>
        <tissue>Embryonic fibroblast</tissue>
    </source>
</reference>
<reference evidence="16 17 18" key="13">
    <citation type="journal article" date="2010" name="J. Biol. Chem.">
        <title>Structural basis of carbohydrate recognition by calreticulin.</title>
        <authorList>
            <person name="Kozlov G."/>
            <person name="Pocanschi C.L."/>
            <person name="Rosenauer A."/>
            <person name="Bastos-Aristizabal S."/>
            <person name="Gorelik A."/>
            <person name="Williams D.B."/>
            <person name="Gehring K."/>
        </authorList>
    </citation>
    <scope>X-RAY CRYSTALLOGRAPHY (1.95 ANGSTROMS) OF 18-368 IN COMPLEXES WITH CALCIUM AND THE TETRASACCHARIDE ALPHA-GLC-(1-&gt;3)-ALPHA-MAN-(1-&gt;2)-ALPHA-MAN-(1-&gt;2)-MAN</scope>
    <scope>FUNCTION</scope>
    <scope>IDENTIFICATION BY MASS SPECTROMETRY</scope>
    <scope>DISULFIDE BOND</scope>
</reference>
<reference evidence="19" key="14">
    <citation type="journal article" date="2011" name="J. Biol. Chem.">
        <title>Structural and functional relationships between the lectin and arm domains of calreticulin.</title>
        <authorList>
            <person name="Pocanschi C.L."/>
            <person name="Kozlov G."/>
            <person name="Brockmeier U."/>
            <person name="Brockmeier A."/>
            <person name="Williams D.B."/>
            <person name="Gehring K."/>
        </authorList>
    </citation>
    <scope>X-RAY CRYSTALLOGRAPHY (2.57 ANGSTROMS) OF 18-368 IN COMPLEX WITH CALCIUM IONS</scope>
    <scope>FUNCTION</scope>
    <scope>DISULFIDE BOND</scope>
</reference>